<evidence type="ECO:0000250" key="1">
    <source>
        <dbReference type="UniProtKB" id="M0R5D6"/>
    </source>
</evidence>
<evidence type="ECO:0000250" key="2">
    <source>
        <dbReference type="UniProtKB" id="Q96PX1"/>
    </source>
</evidence>
<evidence type="ECO:0000255" key="3">
    <source>
        <dbReference type="PROSITE-ProRule" id="PRU00175"/>
    </source>
</evidence>
<evidence type="ECO:0000256" key="4">
    <source>
        <dbReference type="SAM" id="MobiDB-lite"/>
    </source>
</evidence>
<evidence type="ECO:0000305" key="5"/>
<feature type="chain" id="PRO_0000261616" description="E3 ubiquitin ligase Rnf157">
    <location>
        <begin position="1"/>
        <end position="674"/>
    </location>
</feature>
<feature type="zinc finger region" description="RING-type" evidence="3">
    <location>
        <begin position="277"/>
        <end position="316"/>
    </location>
</feature>
<feature type="region of interest" description="Disordered" evidence="4">
    <location>
        <begin position="376"/>
        <end position="404"/>
    </location>
</feature>
<feature type="region of interest" description="Disordered" evidence="4">
    <location>
        <begin position="433"/>
        <end position="610"/>
    </location>
</feature>
<feature type="compositionally biased region" description="Polar residues" evidence="4">
    <location>
        <begin position="469"/>
        <end position="508"/>
    </location>
</feature>
<feature type="compositionally biased region" description="Low complexity" evidence="4">
    <location>
        <begin position="509"/>
        <end position="526"/>
    </location>
</feature>
<feature type="compositionally biased region" description="Polar residues" evidence="4">
    <location>
        <begin position="527"/>
        <end position="537"/>
    </location>
</feature>
<feature type="compositionally biased region" description="Acidic residues" evidence="4">
    <location>
        <begin position="583"/>
        <end position="604"/>
    </location>
</feature>
<proteinExistence type="evidence at transcript level"/>
<reference key="1">
    <citation type="submission" date="2004-06" db="EMBL/GenBank/DDBJ databases">
        <authorList>
            <consortium name="NIH - Xenopus Gene Collection (XGC) project"/>
        </authorList>
    </citation>
    <scope>NUCLEOTIDE SEQUENCE [LARGE SCALE MRNA]</scope>
    <source>
        <tissue>Ovary</tissue>
    </source>
</reference>
<name>RN157_XENLA</name>
<keyword id="KW-0963">Cytoplasm</keyword>
<keyword id="KW-0479">Metal-binding</keyword>
<keyword id="KW-1185">Reference proteome</keyword>
<keyword id="KW-0808">Transferase</keyword>
<keyword id="KW-0833">Ubl conjugation pathway</keyword>
<keyword id="KW-0862">Zinc</keyword>
<keyword id="KW-0863">Zinc-finger</keyword>
<sequence>MGALASRQHAGVEEMDMPCNSLYRYPPKSGSYFGSHFIMGGEKFESSHPEGYLFGENSDLNFLGSRPVTFPYTAPSPQEPVKTLRSLINIRKDTLRLVRCTEELKTTGVEGSRPKVHYNVEFTFDTDARVAITMYYQATEEFQGGIPSYLPKSSNLQSDTVHFKRGVSQQFCFPSHTVDPSEWREEELTFDLDREVYPMVVHAVVEEGEEHLGHSHVLMATFEKHADGSFCVKPLKQKQVVDGVSYLLQEIYGIENKYNSQDSKVAEDELSDNSAECVVCLSDVRDTLILPCRHLCLCNACADTLRYQASNCPICRLPFRALLQIRAMRKVPGPHSPGGFSPIIAAPTSDSEEHTSEHVPPGYEVVSLLEALNGPLTPSPSAPPLRALGEARRPGGLPSYGSDIHLRMHSPLQHLCGGQALKLKKSISRSISQNSSVLQEDEMEKSFSEAEIQTPRKKTSQLAEENGVTPESENLTLSSSGAIDQSSCTGTPLSPTISSPEDPLSSSLAQSIMSMASSHSQQSQLSTDTVSSMSGSYTAGGMEEEEGGITPSPPAAASGSPSIEGELSPAESPEPHFVTVSAEEMDAEGNVTEEEFASPEEDDGQMTGRECDNNNAAGVTLRDVLDNVRGSEGCLADVCYSSIPGQQRSNPYHGSDNCISLQDDTQSHLSTKLV</sequence>
<organism>
    <name type="scientific">Xenopus laevis</name>
    <name type="common">African clawed frog</name>
    <dbReference type="NCBI Taxonomy" id="8355"/>
    <lineage>
        <taxon>Eukaryota</taxon>
        <taxon>Metazoa</taxon>
        <taxon>Chordata</taxon>
        <taxon>Craniata</taxon>
        <taxon>Vertebrata</taxon>
        <taxon>Euteleostomi</taxon>
        <taxon>Amphibia</taxon>
        <taxon>Batrachia</taxon>
        <taxon>Anura</taxon>
        <taxon>Pipoidea</taxon>
        <taxon>Pipidae</taxon>
        <taxon>Xenopodinae</taxon>
        <taxon>Xenopus</taxon>
        <taxon>Xenopus</taxon>
    </lineage>
</organism>
<gene>
    <name type="primary">rnf157</name>
</gene>
<dbReference type="EC" id="2.3.2.27" evidence="2"/>
<dbReference type="EMBL" id="BC072310">
    <property type="protein sequence ID" value="AAH72310.1"/>
    <property type="molecule type" value="mRNA"/>
</dbReference>
<dbReference type="RefSeq" id="NP_001085159.1">
    <property type="nucleotide sequence ID" value="NM_001091690.1"/>
</dbReference>
<dbReference type="DNASU" id="432241"/>
<dbReference type="GeneID" id="432241"/>
<dbReference type="KEGG" id="xla:432241"/>
<dbReference type="AGR" id="Xenbase:XB-GENE-5933428"/>
<dbReference type="CTD" id="432241"/>
<dbReference type="Xenbase" id="XB-GENE-5933428">
    <property type="gene designation" value="rnf157.S"/>
</dbReference>
<dbReference type="OMA" id="QRTICCC"/>
<dbReference type="OrthoDB" id="10014838at2759"/>
<dbReference type="Proteomes" id="UP000186698">
    <property type="component" value="Chromosome 9_10S"/>
</dbReference>
<dbReference type="Bgee" id="432241">
    <property type="expression patterns" value="Expressed in camera-type eye and 20 other cell types or tissues"/>
</dbReference>
<dbReference type="GO" id="GO:0005737">
    <property type="term" value="C:cytoplasm"/>
    <property type="evidence" value="ECO:0000318"/>
    <property type="project" value="GO_Central"/>
</dbReference>
<dbReference type="GO" id="GO:0061630">
    <property type="term" value="F:ubiquitin protein ligase activity"/>
    <property type="evidence" value="ECO:0000318"/>
    <property type="project" value="GO_Central"/>
</dbReference>
<dbReference type="GO" id="GO:0008270">
    <property type="term" value="F:zinc ion binding"/>
    <property type="evidence" value="ECO:0007669"/>
    <property type="project" value="UniProtKB-KW"/>
</dbReference>
<dbReference type="GO" id="GO:0016567">
    <property type="term" value="P:protein ubiquitination"/>
    <property type="evidence" value="ECO:0000318"/>
    <property type="project" value="GO_Central"/>
</dbReference>
<dbReference type="CDD" id="cd16817">
    <property type="entry name" value="mRING-HC-C3HC5_RNF157"/>
    <property type="match status" value="1"/>
</dbReference>
<dbReference type="FunFam" id="3.30.40.10:FF:000013">
    <property type="entry name" value="E3 ubiquitin-protein ligase MGRN1 isoform 1"/>
    <property type="match status" value="1"/>
</dbReference>
<dbReference type="Gene3D" id="3.30.40.10">
    <property type="entry name" value="Zinc/RING finger domain, C3HC4 (zinc finger)"/>
    <property type="match status" value="1"/>
</dbReference>
<dbReference type="InterPro" id="IPR045194">
    <property type="entry name" value="MGRN1/RNF157-like"/>
</dbReference>
<dbReference type="InterPro" id="IPR001841">
    <property type="entry name" value="Znf_RING"/>
</dbReference>
<dbReference type="InterPro" id="IPR013083">
    <property type="entry name" value="Znf_RING/FYVE/PHD"/>
</dbReference>
<dbReference type="PANTHER" id="PTHR22996:SF1">
    <property type="entry name" value="E3 UBIQUITIN LIGASE RNF157"/>
    <property type="match status" value="1"/>
</dbReference>
<dbReference type="PANTHER" id="PTHR22996">
    <property type="entry name" value="MAHOGUNIN"/>
    <property type="match status" value="1"/>
</dbReference>
<dbReference type="Pfam" id="PF13920">
    <property type="entry name" value="zf-C3HC4_3"/>
    <property type="match status" value="1"/>
</dbReference>
<dbReference type="SMART" id="SM00184">
    <property type="entry name" value="RING"/>
    <property type="match status" value="1"/>
</dbReference>
<dbReference type="SUPFAM" id="SSF57850">
    <property type="entry name" value="RING/U-box"/>
    <property type="match status" value="1"/>
</dbReference>
<dbReference type="PROSITE" id="PS50089">
    <property type="entry name" value="ZF_RING_2"/>
    <property type="match status" value="1"/>
</dbReference>
<comment type="function">
    <text evidence="2">E3 ubiquitin ligase that ubiquitinates apbb1 for its degradation by the proteasome and thus prevents apoptosis and promotes survival of neurons (By similarity). Has a dual role in neurons as it is also required for dendrite growth and maintenance for which its ligase activity is not critical (By similarity). May act as a scaffold molecule to regulate this process (By similarity). Acts as a downstream effector of the interconnected PI3K and MAPK signaling pathways and thus participates in the regulation of the cell cycle (By similarity).</text>
</comment>
<comment type="catalytic activity">
    <reaction evidence="2">
        <text>S-ubiquitinyl-[E2 ubiquitin-conjugating enzyme]-L-cysteine + [acceptor protein]-L-lysine = [E2 ubiquitin-conjugating enzyme]-L-cysteine + N(6)-ubiquitinyl-[acceptor protein]-L-lysine.</text>
        <dbReference type="EC" id="2.3.2.27"/>
    </reaction>
</comment>
<comment type="subcellular location">
    <subcellularLocation>
        <location evidence="1">Cytoplasm</location>
    </subcellularLocation>
</comment>
<protein>
    <recommendedName>
        <fullName evidence="2">E3 ubiquitin ligase Rnf157</fullName>
        <ecNumber evidence="2">2.3.2.27</ecNumber>
    </recommendedName>
    <alternativeName>
        <fullName>RING finger protein 157</fullName>
    </alternativeName>
    <alternativeName>
        <fullName evidence="5">RING-type E3 ubiquitin transferase Rnf157</fullName>
    </alternativeName>
</protein>
<accession>Q6INH1</accession>